<feature type="chain" id="PRO_0000089233" description="Uncharacterized protein PF1536">
    <location>
        <begin position="1"/>
        <end position="183"/>
    </location>
</feature>
<feature type="domain" description="Macro" evidence="1">
    <location>
        <begin position="1"/>
        <end position="182"/>
    </location>
</feature>
<name>Y1536_PYRFU</name>
<organism>
    <name type="scientific">Pyrococcus furiosus (strain ATCC 43587 / DSM 3638 / JCM 8422 / Vc1)</name>
    <dbReference type="NCBI Taxonomy" id="186497"/>
    <lineage>
        <taxon>Archaea</taxon>
        <taxon>Methanobacteriati</taxon>
        <taxon>Methanobacteriota</taxon>
        <taxon>Thermococci</taxon>
        <taxon>Thermococcales</taxon>
        <taxon>Thermococcaceae</taxon>
        <taxon>Pyrococcus</taxon>
    </lineage>
</organism>
<dbReference type="EMBL" id="AE009950">
    <property type="protein sequence ID" value="AAL81660.1"/>
    <property type="molecule type" value="Genomic_DNA"/>
</dbReference>
<dbReference type="RefSeq" id="WP_014835438.1">
    <property type="nucleotide sequence ID" value="NZ_CP023154.1"/>
</dbReference>
<dbReference type="SMR" id="Q8U0P9"/>
<dbReference type="STRING" id="186497.PF1536"/>
<dbReference type="PaxDb" id="186497-PF1536"/>
<dbReference type="KEGG" id="pfu:PF1536"/>
<dbReference type="PATRIC" id="fig|186497.12.peg.1601"/>
<dbReference type="eggNOG" id="arCOG04225">
    <property type="taxonomic scope" value="Archaea"/>
</dbReference>
<dbReference type="HOGENOM" id="CLU_046550_7_0_2"/>
<dbReference type="OrthoDB" id="15450at2157"/>
<dbReference type="PhylomeDB" id="Q8U0P9"/>
<dbReference type="Proteomes" id="UP000001013">
    <property type="component" value="Chromosome"/>
</dbReference>
<dbReference type="Gene3D" id="3.40.220.10">
    <property type="entry name" value="Leucine Aminopeptidase, subunit E, domain 1"/>
    <property type="match status" value="1"/>
</dbReference>
<dbReference type="InterPro" id="IPR002589">
    <property type="entry name" value="Macro_dom"/>
</dbReference>
<dbReference type="InterPro" id="IPR043472">
    <property type="entry name" value="Macro_dom-like"/>
</dbReference>
<dbReference type="NCBIfam" id="NF001662">
    <property type="entry name" value="PRK00431.1-3"/>
    <property type="match status" value="1"/>
</dbReference>
<dbReference type="PANTHER" id="PTHR11106">
    <property type="entry name" value="GANGLIOSIDE INDUCED DIFFERENTIATION ASSOCIATED PROTEIN 2-RELATED"/>
    <property type="match status" value="1"/>
</dbReference>
<dbReference type="PANTHER" id="PTHR11106:SF27">
    <property type="entry name" value="MACRO DOMAIN-CONTAINING PROTEIN"/>
    <property type="match status" value="1"/>
</dbReference>
<dbReference type="Pfam" id="PF01661">
    <property type="entry name" value="Macro"/>
    <property type="match status" value="1"/>
</dbReference>
<dbReference type="SMART" id="SM00506">
    <property type="entry name" value="A1pp"/>
    <property type="match status" value="1"/>
</dbReference>
<dbReference type="SUPFAM" id="SSF52949">
    <property type="entry name" value="Macro domain-like"/>
    <property type="match status" value="1"/>
</dbReference>
<dbReference type="PROSITE" id="PS51154">
    <property type="entry name" value="MACRO"/>
    <property type="match status" value="1"/>
</dbReference>
<sequence length="183" mass="19937">MIKVVKGDITKFRAEAIVNAANKYLEHGGGVAYAIAKAAAGDVREYIRISKEAMREQLGKDWIDHGEVVVTPPLQLEKNGVKYVIHTVGPYCGGSWDEDKKSKLKLAILGALKKADELGVKSIAFPAISAGIYGCPLEKVVETFVEVVKEFLPSAKSLREVFLVLYSQEDYEKALKIVGQGGV</sequence>
<protein>
    <recommendedName>
        <fullName>Uncharacterized protein PF1536</fullName>
    </recommendedName>
</protein>
<proteinExistence type="predicted"/>
<gene>
    <name type="ordered locus">PF1536</name>
</gene>
<reference key="1">
    <citation type="journal article" date="1999" name="Genetics">
        <title>Divergence of the hyperthermophilic archaea Pyrococcus furiosus and P. horikoshii inferred from complete genomic sequences.</title>
        <authorList>
            <person name="Maeder D.L."/>
            <person name="Weiss R.B."/>
            <person name="Dunn D.M."/>
            <person name="Cherry J.L."/>
            <person name="Gonzalez J.M."/>
            <person name="DiRuggiero J."/>
            <person name="Robb F.T."/>
        </authorList>
    </citation>
    <scope>NUCLEOTIDE SEQUENCE [LARGE SCALE GENOMIC DNA]</scope>
    <source>
        <strain>ATCC 43587 / DSM 3638 / JCM 8422 / Vc1</strain>
    </source>
</reference>
<keyword id="KW-1185">Reference proteome</keyword>
<accession>Q8U0P9</accession>
<evidence type="ECO:0000255" key="1">
    <source>
        <dbReference type="PROSITE-ProRule" id="PRU00490"/>
    </source>
</evidence>